<keyword id="KW-0028">Amino-acid biosynthesis</keyword>
<keyword id="KW-0963">Cytoplasm</keyword>
<keyword id="KW-0368">Histidine biosynthesis</keyword>
<keyword id="KW-0456">Lyase</keyword>
<keyword id="KW-1185">Reference proteome</keyword>
<organism>
    <name type="scientific">Beijerinckia indica subsp. indica (strain ATCC 9039 / DSM 1715 / NCIMB 8712)</name>
    <dbReference type="NCBI Taxonomy" id="395963"/>
    <lineage>
        <taxon>Bacteria</taxon>
        <taxon>Pseudomonadati</taxon>
        <taxon>Pseudomonadota</taxon>
        <taxon>Alphaproteobacteria</taxon>
        <taxon>Hyphomicrobiales</taxon>
        <taxon>Beijerinckiaceae</taxon>
        <taxon>Beijerinckia</taxon>
    </lineage>
</organism>
<dbReference type="EC" id="4.2.1.19" evidence="1"/>
<dbReference type="EMBL" id="CP001016">
    <property type="protein sequence ID" value="ACB93905.1"/>
    <property type="molecule type" value="Genomic_DNA"/>
</dbReference>
<dbReference type="RefSeq" id="WP_012383263.1">
    <property type="nucleotide sequence ID" value="NC_010581.1"/>
</dbReference>
<dbReference type="SMR" id="B2ICL6"/>
<dbReference type="STRING" id="395963.Bind_0249"/>
<dbReference type="KEGG" id="bid:Bind_0249"/>
<dbReference type="eggNOG" id="COG0131">
    <property type="taxonomic scope" value="Bacteria"/>
</dbReference>
<dbReference type="HOGENOM" id="CLU_044308_2_0_5"/>
<dbReference type="OrthoDB" id="9813612at2"/>
<dbReference type="UniPathway" id="UPA00031">
    <property type="reaction ID" value="UER00011"/>
</dbReference>
<dbReference type="Proteomes" id="UP000001695">
    <property type="component" value="Chromosome"/>
</dbReference>
<dbReference type="GO" id="GO:0005737">
    <property type="term" value="C:cytoplasm"/>
    <property type="evidence" value="ECO:0007669"/>
    <property type="project" value="UniProtKB-SubCell"/>
</dbReference>
<dbReference type="GO" id="GO:0004424">
    <property type="term" value="F:imidazoleglycerol-phosphate dehydratase activity"/>
    <property type="evidence" value="ECO:0007669"/>
    <property type="project" value="UniProtKB-UniRule"/>
</dbReference>
<dbReference type="GO" id="GO:0000105">
    <property type="term" value="P:L-histidine biosynthetic process"/>
    <property type="evidence" value="ECO:0007669"/>
    <property type="project" value="UniProtKB-UniRule"/>
</dbReference>
<dbReference type="CDD" id="cd07914">
    <property type="entry name" value="IGPD"/>
    <property type="match status" value="1"/>
</dbReference>
<dbReference type="FunFam" id="3.30.230.40:FF:000001">
    <property type="entry name" value="Imidazoleglycerol-phosphate dehydratase HisB"/>
    <property type="match status" value="1"/>
</dbReference>
<dbReference type="FunFam" id="3.30.230.40:FF:000003">
    <property type="entry name" value="Imidazoleglycerol-phosphate dehydratase HisB"/>
    <property type="match status" value="1"/>
</dbReference>
<dbReference type="Gene3D" id="3.30.230.40">
    <property type="entry name" value="Imidazole glycerol phosphate dehydratase, domain 1"/>
    <property type="match status" value="2"/>
</dbReference>
<dbReference type="HAMAP" id="MF_00076">
    <property type="entry name" value="HisB"/>
    <property type="match status" value="1"/>
</dbReference>
<dbReference type="InterPro" id="IPR038494">
    <property type="entry name" value="IGPD_sf"/>
</dbReference>
<dbReference type="InterPro" id="IPR000807">
    <property type="entry name" value="ImidazoleglycerolP_deHydtase"/>
</dbReference>
<dbReference type="InterPro" id="IPR020565">
    <property type="entry name" value="ImidazoleglycerP_deHydtase_CS"/>
</dbReference>
<dbReference type="InterPro" id="IPR020568">
    <property type="entry name" value="Ribosomal_Su5_D2-typ_SF"/>
</dbReference>
<dbReference type="NCBIfam" id="NF002109">
    <property type="entry name" value="PRK00951.1-5"/>
    <property type="match status" value="1"/>
</dbReference>
<dbReference type="NCBIfam" id="NF002111">
    <property type="entry name" value="PRK00951.2-1"/>
    <property type="match status" value="1"/>
</dbReference>
<dbReference type="NCBIfam" id="NF002114">
    <property type="entry name" value="PRK00951.2-4"/>
    <property type="match status" value="1"/>
</dbReference>
<dbReference type="PANTHER" id="PTHR23133:SF2">
    <property type="entry name" value="IMIDAZOLEGLYCEROL-PHOSPHATE DEHYDRATASE"/>
    <property type="match status" value="1"/>
</dbReference>
<dbReference type="PANTHER" id="PTHR23133">
    <property type="entry name" value="IMIDAZOLEGLYCEROL-PHOSPHATE DEHYDRATASE HIS7"/>
    <property type="match status" value="1"/>
</dbReference>
<dbReference type="Pfam" id="PF00475">
    <property type="entry name" value="IGPD"/>
    <property type="match status" value="1"/>
</dbReference>
<dbReference type="SUPFAM" id="SSF54211">
    <property type="entry name" value="Ribosomal protein S5 domain 2-like"/>
    <property type="match status" value="2"/>
</dbReference>
<dbReference type="PROSITE" id="PS00954">
    <property type="entry name" value="IGP_DEHYDRATASE_1"/>
    <property type="match status" value="1"/>
</dbReference>
<dbReference type="PROSITE" id="PS00955">
    <property type="entry name" value="IGP_DEHYDRATASE_2"/>
    <property type="match status" value="1"/>
</dbReference>
<accession>B2ICL6</accession>
<proteinExistence type="inferred from homology"/>
<protein>
    <recommendedName>
        <fullName evidence="1">Imidazoleglycerol-phosphate dehydratase</fullName>
        <shortName evidence="1">IGPD</shortName>
        <ecNumber evidence="1">4.2.1.19</ecNumber>
    </recommendedName>
</protein>
<name>HIS7_BEII9</name>
<gene>
    <name evidence="1" type="primary">hisB</name>
    <name type="ordered locus">Bind_0249</name>
</gene>
<feature type="chain" id="PRO_1000092671" description="Imidazoleglycerol-phosphate dehydratase">
    <location>
        <begin position="1"/>
        <end position="195"/>
    </location>
</feature>
<sequence length="195" mass="21556">MRTGAVSRKTKETEIEVAVDLDGRGTAHISTGIGFFDHMLEQLARHSLIDMTIKAKGDLHIDDHHTVEDTGIALGQAVRQALGDRAGITRYADVLLPMDETLTRVAVDVSGRPYLVFRTHFLRDKIGTFDTELVREFFQAFTTHLGANIHVETLYGENAHHISESSFKGLARALRVALTLDPRQLGEIPSTKGVL</sequence>
<comment type="catalytic activity">
    <reaction evidence="1">
        <text>D-erythro-1-(imidazol-4-yl)glycerol 3-phosphate = 3-(imidazol-4-yl)-2-oxopropyl phosphate + H2O</text>
        <dbReference type="Rhea" id="RHEA:11040"/>
        <dbReference type="ChEBI" id="CHEBI:15377"/>
        <dbReference type="ChEBI" id="CHEBI:57766"/>
        <dbReference type="ChEBI" id="CHEBI:58278"/>
        <dbReference type="EC" id="4.2.1.19"/>
    </reaction>
</comment>
<comment type="pathway">
    <text evidence="1">Amino-acid biosynthesis; L-histidine biosynthesis; L-histidine from 5-phospho-alpha-D-ribose 1-diphosphate: step 6/9.</text>
</comment>
<comment type="subcellular location">
    <subcellularLocation>
        <location evidence="1">Cytoplasm</location>
    </subcellularLocation>
</comment>
<comment type="similarity">
    <text evidence="1">Belongs to the imidazoleglycerol-phosphate dehydratase family.</text>
</comment>
<reference key="1">
    <citation type="journal article" date="2010" name="J. Bacteriol.">
        <title>Complete genome sequence of Beijerinckia indica subsp. indica.</title>
        <authorList>
            <person name="Tamas I."/>
            <person name="Dedysh S.N."/>
            <person name="Liesack W."/>
            <person name="Stott M.B."/>
            <person name="Alam M."/>
            <person name="Murrell J.C."/>
            <person name="Dunfield P.F."/>
        </authorList>
    </citation>
    <scope>NUCLEOTIDE SEQUENCE [LARGE SCALE GENOMIC DNA]</scope>
    <source>
        <strain>ATCC 9039 / DSM 1715 / NCIMB 8712</strain>
    </source>
</reference>
<evidence type="ECO:0000255" key="1">
    <source>
        <dbReference type="HAMAP-Rule" id="MF_00076"/>
    </source>
</evidence>